<feature type="chain" id="PRO_0000137199" description="Translation initiation factor IF-2">
    <location>
        <begin position="1"/>
        <end position="597"/>
    </location>
</feature>
<feature type="domain" description="tr-type G">
    <location>
        <begin position="98"/>
        <end position="271"/>
    </location>
</feature>
<feature type="region of interest" description="Disordered" evidence="3">
    <location>
        <begin position="57"/>
        <end position="96"/>
    </location>
</feature>
<feature type="region of interest" description="G1" evidence="1">
    <location>
        <begin position="107"/>
        <end position="114"/>
    </location>
</feature>
<feature type="region of interest" description="G2" evidence="1">
    <location>
        <begin position="132"/>
        <end position="136"/>
    </location>
</feature>
<feature type="region of interest" description="G3" evidence="1">
    <location>
        <begin position="153"/>
        <end position="156"/>
    </location>
</feature>
<feature type="region of interest" description="G4" evidence="1">
    <location>
        <begin position="207"/>
        <end position="210"/>
    </location>
</feature>
<feature type="region of interest" description="G5" evidence="1">
    <location>
        <begin position="243"/>
        <end position="245"/>
    </location>
</feature>
<feature type="compositionally biased region" description="Low complexity" evidence="3">
    <location>
        <begin position="57"/>
        <end position="73"/>
    </location>
</feature>
<feature type="compositionally biased region" description="Low complexity" evidence="3">
    <location>
        <begin position="81"/>
        <end position="95"/>
    </location>
</feature>
<feature type="binding site" evidence="2">
    <location>
        <begin position="107"/>
        <end position="114"/>
    </location>
    <ligand>
        <name>GTP</name>
        <dbReference type="ChEBI" id="CHEBI:37565"/>
    </ligand>
</feature>
<feature type="binding site" evidence="2">
    <location>
        <begin position="153"/>
        <end position="157"/>
    </location>
    <ligand>
        <name>GTP</name>
        <dbReference type="ChEBI" id="CHEBI:37565"/>
    </ligand>
</feature>
<feature type="binding site" evidence="2">
    <location>
        <begin position="207"/>
        <end position="210"/>
    </location>
    <ligand>
        <name>GTP</name>
        <dbReference type="ChEBI" id="CHEBI:37565"/>
    </ligand>
</feature>
<accession>Q9RTG5</accession>
<keyword id="KW-0963">Cytoplasm</keyword>
<keyword id="KW-0342">GTP-binding</keyword>
<keyword id="KW-0396">Initiation factor</keyword>
<keyword id="KW-0547">Nucleotide-binding</keyword>
<keyword id="KW-0648">Protein biosynthesis</keyword>
<keyword id="KW-1185">Reference proteome</keyword>
<organism>
    <name type="scientific">Deinococcus radiodurans (strain ATCC 13939 / DSM 20539 / JCM 16871 / CCUG 27074 / LMG 4051 / NBRC 15346 / NCIMB 9279 / VKM B-1422 / R1)</name>
    <dbReference type="NCBI Taxonomy" id="243230"/>
    <lineage>
        <taxon>Bacteria</taxon>
        <taxon>Thermotogati</taxon>
        <taxon>Deinococcota</taxon>
        <taxon>Deinococci</taxon>
        <taxon>Deinococcales</taxon>
        <taxon>Deinococcaceae</taxon>
        <taxon>Deinococcus</taxon>
    </lineage>
</organism>
<proteinExistence type="inferred from homology"/>
<comment type="function">
    <text evidence="2">One of the essential components for the initiation of protein synthesis. Protects formylmethionyl-tRNA from spontaneous hydrolysis and promotes its binding to the 30S ribosomal subunits. Also involved in the hydrolysis of GTP during the formation of the 70S ribosomal complex.</text>
</comment>
<comment type="subcellular location">
    <subcellularLocation>
        <location evidence="2">Cytoplasm</location>
    </subcellularLocation>
</comment>
<comment type="similarity">
    <text evidence="2">Belongs to the TRAFAC class translation factor GTPase superfamily. Classic translation factor GTPase family. IF-2 subfamily.</text>
</comment>
<dbReference type="EMBL" id="AE000513">
    <property type="protein sequence ID" value="AAF11355.1"/>
    <property type="molecule type" value="Genomic_DNA"/>
</dbReference>
<dbReference type="PIR" id="C75351">
    <property type="entry name" value="C75351"/>
</dbReference>
<dbReference type="RefSeq" id="NP_295522.1">
    <property type="nucleotide sequence ID" value="NC_001263.1"/>
</dbReference>
<dbReference type="RefSeq" id="WP_010888434.1">
    <property type="nucleotide sequence ID" value="NC_001263.1"/>
</dbReference>
<dbReference type="SMR" id="Q9RTG5"/>
<dbReference type="FunCoup" id="Q9RTG5">
    <property type="interactions" value="467"/>
</dbReference>
<dbReference type="STRING" id="243230.DR_1799"/>
<dbReference type="PaxDb" id="243230-DR_1799"/>
<dbReference type="EnsemblBacteria" id="AAF11355">
    <property type="protein sequence ID" value="AAF11355"/>
    <property type="gene ID" value="DR_1799"/>
</dbReference>
<dbReference type="GeneID" id="69518039"/>
<dbReference type="KEGG" id="dra:DR_1799"/>
<dbReference type="PATRIC" id="fig|243230.17.peg.2012"/>
<dbReference type="eggNOG" id="COG0532">
    <property type="taxonomic scope" value="Bacteria"/>
</dbReference>
<dbReference type="HOGENOM" id="CLU_006301_5_2_0"/>
<dbReference type="InParanoid" id="Q9RTG5"/>
<dbReference type="OrthoDB" id="9811804at2"/>
<dbReference type="Proteomes" id="UP000002524">
    <property type="component" value="Chromosome 1"/>
</dbReference>
<dbReference type="GO" id="GO:0005737">
    <property type="term" value="C:cytoplasm"/>
    <property type="evidence" value="ECO:0000318"/>
    <property type="project" value="GO_Central"/>
</dbReference>
<dbReference type="GO" id="GO:0005829">
    <property type="term" value="C:cytosol"/>
    <property type="evidence" value="ECO:0000318"/>
    <property type="project" value="GO_Central"/>
</dbReference>
<dbReference type="GO" id="GO:0005525">
    <property type="term" value="F:GTP binding"/>
    <property type="evidence" value="ECO:0007669"/>
    <property type="project" value="UniProtKB-KW"/>
</dbReference>
<dbReference type="GO" id="GO:0003924">
    <property type="term" value="F:GTPase activity"/>
    <property type="evidence" value="ECO:0007669"/>
    <property type="project" value="UniProtKB-UniRule"/>
</dbReference>
<dbReference type="GO" id="GO:0003743">
    <property type="term" value="F:translation initiation factor activity"/>
    <property type="evidence" value="ECO:0000318"/>
    <property type="project" value="GO_Central"/>
</dbReference>
<dbReference type="GO" id="GO:0006413">
    <property type="term" value="P:translational initiation"/>
    <property type="evidence" value="ECO:0000318"/>
    <property type="project" value="GO_Central"/>
</dbReference>
<dbReference type="CDD" id="cd01887">
    <property type="entry name" value="IF2_eIF5B"/>
    <property type="match status" value="1"/>
</dbReference>
<dbReference type="CDD" id="cd03702">
    <property type="entry name" value="IF2_mtIF2_II"/>
    <property type="match status" value="1"/>
</dbReference>
<dbReference type="CDD" id="cd03692">
    <property type="entry name" value="mtIF2_IVc"/>
    <property type="match status" value="1"/>
</dbReference>
<dbReference type="FunFam" id="1.10.10.2480:FF:000003">
    <property type="entry name" value="Translation initiation factor IF-2"/>
    <property type="match status" value="1"/>
</dbReference>
<dbReference type="FunFam" id="2.40.30.10:FF:000007">
    <property type="entry name" value="Translation initiation factor IF-2"/>
    <property type="match status" value="1"/>
</dbReference>
<dbReference type="FunFam" id="2.40.30.10:FF:000008">
    <property type="entry name" value="Translation initiation factor IF-2"/>
    <property type="match status" value="1"/>
</dbReference>
<dbReference type="FunFam" id="3.40.50.10050:FF:000001">
    <property type="entry name" value="Translation initiation factor IF-2"/>
    <property type="match status" value="1"/>
</dbReference>
<dbReference type="FunFam" id="3.40.50.300:FF:000019">
    <property type="entry name" value="Translation initiation factor IF-2"/>
    <property type="match status" value="1"/>
</dbReference>
<dbReference type="Gene3D" id="1.10.10.2480">
    <property type="match status" value="1"/>
</dbReference>
<dbReference type="Gene3D" id="3.40.50.300">
    <property type="entry name" value="P-loop containing nucleotide triphosphate hydrolases"/>
    <property type="match status" value="1"/>
</dbReference>
<dbReference type="Gene3D" id="2.40.30.10">
    <property type="entry name" value="Translation factors"/>
    <property type="match status" value="2"/>
</dbReference>
<dbReference type="Gene3D" id="3.40.50.10050">
    <property type="entry name" value="Translation initiation factor IF- 2, domain 3"/>
    <property type="match status" value="1"/>
</dbReference>
<dbReference type="HAMAP" id="MF_00100_B">
    <property type="entry name" value="IF_2_B"/>
    <property type="match status" value="1"/>
</dbReference>
<dbReference type="InterPro" id="IPR053905">
    <property type="entry name" value="EF-G-like_DII"/>
</dbReference>
<dbReference type="InterPro" id="IPR044145">
    <property type="entry name" value="IF2_II"/>
</dbReference>
<dbReference type="InterPro" id="IPR006847">
    <property type="entry name" value="IF2_N"/>
</dbReference>
<dbReference type="InterPro" id="IPR027417">
    <property type="entry name" value="P-loop_NTPase"/>
</dbReference>
<dbReference type="InterPro" id="IPR005225">
    <property type="entry name" value="Small_GTP-bd"/>
</dbReference>
<dbReference type="InterPro" id="IPR000795">
    <property type="entry name" value="T_Tr_GTP-bd_dom"/>
</dbReference>
<dbReference type="InterPro" id="IPR000178">
    <property type="entry name" value="TF_IF2_bacterial-like"/>
</dbReference>
<dbReference type="InterPro" id="IPR015760">
    <property type="entry name" value="TIF_IF2"/>
</dbReference>
<dbReference type="InterPro" id="IPR023115">
    <property type="entry name" value="TIF_IF2_dom3"/>
</dbReference>
<dbReference type="InterPro" id="IPR036925">
    <property type="entry name" value="TIF_IF2_dom3_sf"/>
</dbReference>
<dbReference type="InterPro" id="IPR009000">
    <property type="entry name" value="Transl_B-barrel_sf"/>
</dbReference>
<dbReference type="NCBIfam" id="TIGR00487">
    <property type="entry name" value="IF-2"/>
    <property type="match status" value="1"/>
</dbReference>
<dbReference type="NCBIfam" id="TIGR00231">
    <property type="entry name" value="small_GTP"/>
    <property type="match status" value="1"/>
</dbReference>
<dbReference type="PANTHER" id="PTHR43381:SF5">
    <property type="entry name" value="TR-TYPE G DOMAIN-CONTAINING PROTEIN"/>
    <property type="match status" value="1"/>
</dbReference>
<dbReference type="PANTHER" id="PTHR43381">
    <property type="entry name" value="TRANSLATION INITIATION FACTOR IF-2-RELATED"/>
    <property type="match status" value="1"/>
</dbReference>
<dbReference type="Pfam" id="PF22042">
    <property type="entry name" value="EF-G_D2"/>
    <property type="match status" value="1"/>
</dbReference>
<dbReference type="Pfam" id="PF00009">
    <property type="entry name" value="GTP_EFTU"/>
    <property type="match status" value="1"/>
</dbReference>
<dbReference type="Pfam" id="PF11987">
    <property type="entry name" value="IF-2"/>
    <property type="match status" value="1"/>
</dbReference>
<dbReference type="Pfam" id="PF04760">
    <property type="entry name" value="IF2_N"/>
    <property type="match status" value="1"/>
</dbReference>
<dbReference type="SUPFAM" id="SSF52156">
    <property type="entry name" value="Initiation factor IF2/eIF5b, domain 3"/>
    <property type="match status" value="1"/>
</dbReference>
<dbReference type="SUPFAM" id="SSF52540">
    <property type="entry name" value="P-loop containing nucleoside triphosphate hydrolases"/>
    <property type="match status" value="1"/>
</dbReference>
<dbReference type="SUPFAM" id="SSF50447">
    <property type="entry name" value="Translation proteins"/>
    <property type="match status" value="2"/>
</dbReference>
<dbReference type="PROSITE" id="PS51722">
    <property type="entry name" value="G_TR_2"/>
    <property type="match status" value="1"/>
</dbReference>
<dbReference type="PROSITE" id="PS01176">
    <property type="entry name" value="IF2"/>
    <property type="match status" value="1"/>
</dbReference>
<evidence type="ECO:0000250" key="1"/>
<evidence type="ECO:0000255" key="2">
    <source>
        <dbReference type="HAMAP-Rule" id="MF_00100"/>
    </source>
</evidence>
<evidence type="ECO:0000256" key="3">
    <source>
        <dbReference type="SAM" id="MobiDB-lite"/>
    </source>
</evidence>
<reference key="1">
    <citation type="journal article" date="1999" name="Science">
        <title>Genome sequence of the radioresistant bacterium Deinococcus radiodurans R1.</title>
        <authorList>
            <person name="White O."/>
            <person name="Eisen J.A."/>
            <person name="Heidelberg J.F."/>
            <person name="Hickey E.K."/>
            <person name="Peterson J.D."/>
            <person name="Dodson R.J."/>
            <person name="Haft D.H."/>
            <person name="Gwinn M.L."/>
            <person name="Nelson W.C."/>
            <person name="Richardson D.L."/>
            <person name="Moffat K.S."/>
            <person name="Qin H."/>
            <person name="Jiang L."/>
            <person name="Pamphile W."/>
            <person name="Crosby M."/>
            <person name="Shen M."/>
            <person name="Vamathevan J.J."/>
            <person name="Lam P."/>
            <person name="McDonald L.A."/>
            <person name="Utterback T.R."/>
            <person name="Zalewski C."/>
            <person name="Makarova K.S."/>
            <person name="Aravind L."/>
            <person name="Daly M.J."/>
            <person name="Minton K.W."/>
            <person name="Fleischmann R.D."/>
            <person name="Ketchum K.A."/>
            <person name="Nelson K.E."/>
            <person name="Salzberg S.L."/>
            <person name="Smith H.O."/>
            <person name="Venter J.C."/>
            <person name="Fraser C.M."/>
        </authorList>
    </citation>
    <scope>NUCLEOTIDE SEQUENCE [LARGE SCALE GENOMIC DNA]</scope>
    <source>
        <strain>ATCC 13939 / DSM 20539 / JCM 16871 / CCUG 27074 / LMG 4051 / NBRC 15346 / NCIMB 9279 / VKM B-1422 / R1</strain>
    </source>
</reference>
<name>IF2_DEIRA</name>
<protein>
    <recommendedName>
        <fullName evidence="2">Translation initiation factor IF-2</fullName>
    </recommendedName>
</protein>
<gene>
    <name evidence="2" type="primary">infB</name>
    <name type="ordered locus">DR_1799</name>
</gene>
<sequence length="597" mass="64024">MSKVRIYTLAKDLGVDNHKMLEILDGLGVSYKSVSSTIDEENVEIIKQILADEAAEGGDAAPAAASAPAAATAEPEEADETPAAAAQADAEPASDLPHRAPVVTIMGHVDHGKTSLLDYIRKTRVAAKEAGGITQHVGAFEAKTSKGKIVFIDTPGHEAFTTIRARGANVADIAIIVIAADDSLMPQTREAIAHAQAAKVPMLIAINKVDLPQADPEKVKTDLTQLNLVPEEYGGDVIVVPVSAKTGEGVEDLLEYISLTAELEDLRADPKGQFSGVIIEGRVDKQAGVLATVMVQEGTLHVGDFLVVGENYGKIKAMTDSNGGRIKEAGPSTPVQILGFSEVPSSGETVVSAKNEHAAREIVAQRASDRRDEEDARERRKAQRSLADLLGPLGEVHTVNLILRADTQGSLEAIQGILARKETEDVKLNVMLAGIGAPTEGDVLLASTAEAQILCFNVTPSAAVTKVAETKEIPIKAYRIIYEMIDEVDRLIKGNLDPVFEEQYLGRAEVRMVIHHPKSGNIAGSYVTDGMFKRNAKAKVTRGKEVVYEGTVVGLKRFKDDVREVQQGYECGINIDWNDVQEGDIIEASEMVEVEPR</sequence>